<sequence>MAAPKKRTSKSRKNMRKSTWKRQAATQAKKALSLAKSIATGKSTIRGVQSNLSDES</sequence>
<dbReference type="EMBL" id="AF166114">
    <property type="protein sequence ID" value="AAF43880.1"/>
    <property type="molecule type" value="Genomic_DNA"/>
</dbReference>
<dbReference type="RefSeq" id="NP_038442.1">
    <property type="nucleotide sequence ID" value="NC_002186.1"/>
</dbReference>
<dbReference type="SMR" id="Q9MUL8"/>
<dbReference type="GeneID" id="800987"/>
<dbReference type="GO" id="GO:0009507">
    <property type="term" value="C:chloroplast"/>
    <property type="evidence" value="ECO:0007669"/>
    <property type="project" value="UniProtKB-SubCell"/>
</dbReference>
<dbReference type="GO" id="GO:0015934">
    <property type="term" value="C:large ribosomal subunit"/>
    <property type="evidence" value="ECO:0007669"/>
    <property type="project" value="InterPro"/>
</dbReference>
<dbReference type="GO" id="GO:0003735">
    <property type="term" value="F:structural constituent of ribosome"/>
    <property type="evidence" value="ECO:0007669"/>
    <property type="project" value="InterPro"/>
</dbReference>
<dbReference type="GO" id="GO:0006412">
    <property type="term" value="P:translation"/>
    <property type="evidence" value="ECO:0007669"/>
    <property type="project" value="UniProtKB-UniRule"/>
</dbReference>
<dbReference type="HAMAP" id="MF_00340">
    <property type="entry name" value="Ribosomal_bL32"/>
    <property type="match status" value="1"/>
</dbReference>
<dbReference type="InterPro" id="IPR002677">
    <property type="entry name" value="Ribosomal_bL32"/>
</dbReference>
<dbReference type="InterPro" id="IPR044958">
    <property type="entry name" value="Ribosomal_bL32_plant/cyanobact"/>
</dbReference>
<dbReference type="InterPro" id="IPR011332">
    <property type="entry name" value="Ribosomal_zn-bd"/>
</dbReference>
<dbReference type="PANTHER" id="PTHR36083">
    <property type="entry name" value="50S RIBOSOMAL PROTEIN L32, CHLOROPLASTIC"/>
    <property type="match status" value="1"/>
</dbReference>
<dbReference type="PANTHER" id="PTHR36083:SF1">
    <property type="entry name" value="LARGE RIBOSOMAL SUBUNIT PROTEIN BL32C"/>
    <property type="match status" value="1"/>
</dbReference>
<dbReference type="Pfam" id="PF01783">
    <property type="entry name" value="Ribosomal_L32p"/>
    <property type="match status" value="1"/>
</dbReference>
<dbReference type="SUPFAM" id="SSF57829">
    <property type="entry name" value="Zn-binding ribosomal proteins"/>
    <property type="match status" value="1"/>
</dbReference>
<reference key="1">
    <citation type="journal article" date="2000" name="Nature">
        <title>Ancestral chloroplast genome in Mesostigma viride reveals an early branch of green plant evolution.</title>
        <authorList>
            <person name="Lemieux C."/>
            <person name="Otis C."/>
            <person name="Turmel M."/>
        </authorList>
    </citation>
    <scope>NUCLEOTIDE SEQUENCE [LARGE SCALE GENOMIC DNA]</scope>
    <source>
        <strain>NIES-296 / KY-14 / CCMP 2046</strain>
    </source>
</reference>
<geneLocation type="chloroplast"/>
<comment type="subcellular location">
    <subcellularLocation>
        <location>Plastid</location>
        <location>Chloroplast</location>
    </subcellularLocation>
</comment>
<comment type="similarity">
    <text evidence="2">Belongs to the bacterial ribosomal protein bL32 family.</text>
</comment>
<protein>
    <recommendedName>
        <fullName evidence="2">Large ribosomal subunit protein bL32c</fullName>
    </recommendedName>
    <alternativeName>
        <fullName>50S ribosomal protein L32, chloroplastic</fullName>
    </alternativeName>
</protein>
<organism>
    <name type="scientific">Mesostigma viride</name>
    <name type="common">Green alga</name>
    <dbReference type="NCBI Taxonomy" id="41882"/>
    <lineage>
        <taxon>Eukaryota</taxon>
        <taxon>Viridiplantae</taxon>
        <taxon>Streptophyta</taxon>
        <taxon>Mesostigmatophyceae</taxon>
        <taxon>Mesostigmatales</taxon>
        <taxon>Mesostigmataceae</taxon>
        <taxon>Mesostigma</taxon>
    </lineage>
</organism>
<keyword id="KW-0150">Chloroplast</keyword>
<keyword id="KW-0934">Plastid</keyword>
<keyword id="KW-0687">Ribonucleoprotein</keyword>
<keyword id="KW-0689">Ribosomal protein</keyword>
<gene>
    <name type="primary">rpl32</name>
</gene>
<proteinExistence type="inferred from homology"/>
<name>RK32_MESVI</name>
<evidence type="ECO:0000256" key="1">
    <source>
        <dbReference type="SAM" id="MobiDB-lite"/>
    </source>
</evidence>
<evidence type="ECO:0000305" key="2"/>
<accession>Q9MUL8</accession>
<feature type="chain" id="PRO_0000172465" description="Large ribosomal subunit protein bL32c">
    <location>
        <begin position="1"/>
        <end position="56"/>
    </location>
</feature>
<feature type="region of interest" description="Disordered" evidence="1">
    <location>
        <begin position="1"/>
        <end position="28"/>
    </location>
</feature>
<feature type="compositionally biased region" description="Basic residues" evidence="1">
    <location>
        <begin position="1"/>
        <end position="20"/>
    </location>
</feature>